<reference key="1">
    <citation type="journal article" date="2004" name="Nat. Biotechnol.">
        <title>The genome sequence of the capnophilic rumen bacterium Mannheimia succiniciproducens.</title>
        <authorList>
            <person name="Hong S.H."/>
            <person name="Kim J.S."/>
            <person name="Lee S.Y."/>
            <person name="In Y.H."/>
            <person name="Choi S.S."/>
            <person name="Rih J.-K."/>
            <person name="Kim C.H."/>
            <person name="Jeong H."/>
            <person name="Hur C.G."/>
            <person name="Kim J.J."/>
        </authorList>
    </citation>
    <scope>NUCLEOTIDE SEQUENCE [LARGE SCALE GENOMIC DNA]</scope>
    <source>
        <strain>KCTC 0769BP / MBEL55E</strain>
    </source>
</reference>
<gene>
    <name evidence="1" type="primary">murC</name>
    <name type="ordered locus">MS1666</name>
</gene>
<protein>
    <recommendedName>
        <fullName evidence="1">UDP-N-acetylmuramate--L-alanine ligase</fullName>
        <ecNumber evidence="1">6.3.2.8</ecNumber>
    </recommendedName>
    <alternativeName>
        <fullName evidence="1">UDP-N-acetylmuramoyl-L-alanine synthetase</fullName>
    </alternativeName>
</protein>
<evidence type="ECO:0000255" key="1">
    <source>
        <dbReference type="HAMAP-Rule" id="MF_00046"/>
    </source>
</evidence>
<organism>
    <name type="scientific">Mannheimia succiniciproducens (strain KCTC 0769BP / MBEL55E)</name>
    <dbReference type="NCBI Taxonomy" id="221988"/>
    <lineage>
        <taxon>Bacteria</taxon>
        <taxon>Pseudomonadati</taxon>
        <taxon>Pseudomonadota</taxon>
        <taxon>Gammaproteobacteria</taxon>
        <taxon>Pasteurellales</taxon>
        <taxon>Pasteurellaceae</taxon>
        <taxon>Basfia</taxon>
    </lineage>
</organism>
<proteinExistence type="inferred from homology"/>
<comment type="function">
    <text evidence="1">Cell wall formation.</text>
</comment>
<comment type="catalytic activity">
    <reaction evidence="1">
        <text>UDP-N-acetyl-alpha-D-muramate + L-alanine + ATP = UDP-N-acetyl-alpha-D-muramoyl-L-alanine + ADP + phosphate + H(+)</text>
        <dbReference type="Rhea" id="RHEA:23372"/>
        <dbReference type="ChEBI" id="CHEBI:15378"/>
        <dbReference type="ChEBI" id="CHEBI:30616"/>
        <dbReference type="ChEBI" id="CHEBI:43474"/>
        <dbReference type="ChEBI" id="CHEBI:57972"/>
        <dbReference type="ChEBI" id="CHEBI:70757"/>
        <dbReference type="ChEBI" id="CHEBI:83898"/>
        <dbReference type="ChEBI" id="CHEBI:456216"/>
        <dbReference type="EC" id="6.3.2.8"/>
    </reaction>
</comment>
<comment type="pathway">
    <text evidence="1">Cell wall biogenesis; peptidoglycan biosynthesis.</text>
</comment>
<comment type="subcellular location">
    <subcellularLocation>
        <location evidence="1">Cytoplasm</location>
    </subcellularLocation>
</comment>
<comment type="similarity">
    <text evidence="1">Belongs to the MurCDEF family.</text>
</comment>
<dbReference type="EC" id="6.3.2.8" evidence="1"/>
<dbReference type="EMBL" id="AE016827">
    <property type="protein sequence ID" value="AAU38273.1"/>
    <property type="molecule type" value="Genomic_DNA"/>
</dbReference>
<dbReference type="RefSeq" id="WP_011200834.1">
    <property type="nucleotide sequence ID" value="NC_006300.1"/>
</dbReference>
<dbReference type="SMR" id="Q65RY7"/>
<dbReference type="STRING" id="221988.MS1666"/>
<dbReference type="KEGG" id="msu:MS1666"/>
<dbReference type="eggNOG" id="COG0773">
    <property type="taxonomic scope" value="Bacteria"/>
</dbReference>
<dbReference type="HOGENOM" id="CLU_028104_2_2_6"/>
<dbReference type="OrthoDB" id="9804126at2"/>
<dbReference type="UniPathway" id="UPA00219"/>
<dbReference type="Proteomes" id="UP000000607">
    <property type="component" value="Chromosome"/>
</dbReference>
<dbReference type="GO" id="GO:0005737">
    <property type="term" value="C:cytoplasm"/>
    <property type="evidence" value="ECO:0007669"/>
    <property type="project" value="UniProtKB-SubCell"/>
</dbReference>
<dbReference type="GO" id="GO:0005524">
    <property type="term" value="F:ATP binding"/>
    <property type="evidence" value="ECO:0007669"/>
    <property type="project" value="UniProtKB-UniRule"/>
</dbReference>
<dbReference type="GO" id="GO:0008763">
    <property type="term" value="F:UDP-N-acetylmuramate-L-alanine ligase activity"/>
    <property type="evidence" value="ECO:0007669"/>
    <property type="project" value="UniProtKB-UniRule"/>
</dbReference>
<dbReference type="GO" id="GO:0051301">
    <property type="term" value="P:cell division"/>
    <property type="evidence" value="ECO:0007669"/>
    <property type="project" value="UniProtKB-KW"/>
</dbReference>
<dbReference type="GO" id="GO:0071555">
    <property type="term" value="P:cell wall organization"/>
    <property type="evidence" value="ECO:0007669"/>
    <property type="project" value="UniProtKB-KW"/>
</dbReference>
<dbReference type="GO" id="GO:0009252">
    <property type="term" value="P:peptidoglycan biosynthetic process"/>
    <property type="evidence" value="ECO:0007669"/>
    <property type="project" value="UniProtKB-UniRule"/>
</dbReference>
<dbReference type="GO" id="GO:0008360">
    <property type="term" value="P:regulation of cell shape"/>
    <property type="evidence" value="ECO:0007669"/>
    <property type="project" value="UniProtKB-KW"/>
</dbReference>
<dbReference type="CDD" id="cd01983">
    <property type="entry name" value="SIMIBI"/>
    <property type="match status" value="1"/>
</dbReference>
<dbReference type="FunFam" id="3.40.1190.10:FF:000001">
    <property type="entry name" value="UDP-N-acetylmuramate--L-alanine ligase"/>
    <property type="match status" value="1"/>
</dbReference>
<dbReference type="FunFam" id="3.40.50.720:FF:000046">
    <property type="entry name" value="UDP-N-acetylmuramate--L-alanine ligase"/>
    <property type="match status" value="1"/>
</dbReference>
<dbReference type="Gene3D" id="3.90.190.20">
    <property type="entry name" value="Mur ligase, C-terminal domain"/>
    <property type="match status" value="1"/>
</dbReference>
<dbReference type="Gene3D" id="3.40.1190.10">
    <property type="entry name" value="Mur-like, catalytic domain"/>
    <property type="match status" value="1"/>
</dbReference>
<dbReference type="Gene3D" id="3.40.50.720">
    <property type="entry name" value="NAD(P)-binding Rossmann-like Domain"/>
    <property type="match status" value="1"/>
</dbReference>
<dbReference type="HAMAP" id="MF_00046">
    <property type="entry name" value="MurC"/>
    <property type="match status" value="1"/>
</dbReference>
<dbReference type="InterPro" id="IPR036565">
    <property type="entry name" value="Mur-like_cat_sf"/>
</dbReference>
<dbReference type="InterPro" id="IPR004101">
    <property type="entry name" value="Mur_ligase_C"/>
</dbReference>
<dbReference type="InterPro" id="IPR036615">
    <property type="entry name" value="Mur_ligase_C_dom_sf"/>
</dbReference>
<dbReference type="InterPro" id="IPR013221">
    <property type="entry name" value="Mur_ligase_cen"/>
</dbReference>
<dbReference type="InterPro" id="IPR000713">
    <property type="entry name" value="Mur_ligase_N"/>
</dbReference>
<dbReference type="InterPro" id="IPR050061">
    <property type="entry name" value="MurCDEF_pg_biosynth"/>
</dbReference>
<dbReference type="InterPro" id="IPR005758">
    <property type="entry name" value="UDP-N-AcMur_Ala_ligase_MurC"/>
</dbReference>
<dbReference type="NCBIfam" id="TIGR01082">
    <property type="entry name" value="murC"/>
    <property type="match status" value="1"/>
</dbReference>
<dbReference type="PANTHER" id="PTHR43445:SF3">
    <property type="entry name" value="UDP-N-ACETYLMURAMATE--L-ALANINE LIGASE"/>
    <property type="match status" value="1"/>
</dbReference>
<dbReference type="PANTHER" id="PTHR43445">
    <property type="entry name" value="UDP-N-ACETYLMURAMATE--L-ALANINE LIGASE-RELATED"/>
    <property type="match status" value="1"/>
</dbReference>
<dbReference type="Pfam" id="PF01225">
    <property type="entry name" value="Mur_ligase"/>
    <property type="match status" value="1"/>
</dbReference>
<dbReference type="Pfam" id="PF02875">
    <property type="entry name" value="Mur_ligase_C"/>
    <property type="match status" value="1"/>
</dbReference>
<dbReference type="Pfam" id="PF08245">
    <property type="entry name" value="Mur_ligase_M"/>
    <property type="match status" value="1"/>
</dbReference>
<dbReference type="SUPFAM" id="SSF51984">
    <property type="entry name" value="MurCD N-terminal domain"/>
    <property type="match status" value="1"/>
</dbReference>
<dbReference type="SUPFAM" id="SSF53623">
    <property type="entry name" value="MurD-like peptide ligases, catalytic domain"/>
    <property type="match status" value="1"/>
</dbReference>
<dbReference type="SUPFAM" id="SSF53244">
    <property type="entry name" value="MurD-like peptide ligases, peptide-binding domain"/>
    <property type="match status" value="1"/>
</dbReference>
<feature type="chain" id="PRO_0000182115" description="UDP-N-acetylmuramate--L-alanine ligase">
    <location>
        <begin position="1"/>
        <end position="480"/>
    </location>
</feature>
<feature type="binding site" evidence="1">
    <location>
        <begin position="129"/>
        <end position="135"/>
    </location>
    <ligand>
        <name>ATP</name>
        <dbReference type="ChEBI" id="CHEBI:30616"/>
    </ligand>
</feature>
<keyword id="KW-0067">ATP-binding</keyword>
<keyword id="KW-0131">Cell cycle</keyword>
<keyword id="KW-0132">Cell division</keyword>
<keyword id="KW-0133">Cell shape</keyword>
<keyword id="KW-0961">Cell wall biogenesis/degradation</keyword>
<keyword id="KW-0963">Cytoplasm</keyword>
<keyword id="KW-0436">Ligase</keyword>
<keyword id="KW-0547">Nucleotide-binding</keyword>
<keyword id="KW-0573">Peptidoglycan synthesis</keyword>
<sequence>MINAKKEFQQRVRNMIPGMRRVHQIHFVGIGGAGMGGIAEVLLNEGYAVTGSDIAESAVTNRLISLGAKIHFSHAASNVDNASVVVVSSAIKADNVEVVAAHEKRIPVIQRAQMLAEIMRFRHGIAVAGTHGKTTTTAMISMIYAQAGLDPTFVNGGLVKSAGTNAHLGCSRYLIAEADESDASFLHLQPMVSVVTNIEPDHMDTYHGDFDEMKRTYVNFLHNLPFYGLSVMCADDPVLLELIPQVGRPVITYGFSEEADYRIENYEQTGFQGHYSVITPAGERIDVLLNVPGKHNALNATAALAVAKEEGIENEAILAALADFQGAGRRFDQLGSFIRPNGKVMLVDDYGHHPTEVNVTIQAARKGWENKRIVMIFQPHRYSRTRDLFDDFVRVLSQVDLLIMLDVYPAGESPIAGADSRSLCRSIRNLGQVDPILVTDTAELPEIMDRVLQDGDLVLAQGAGNVSKLSRQLVELWTKA</sequence>
<accession>Q65RY7</accession>
<name>MURC_MANSM</name>